<organism>
    <name type="scientific">Listeria monocytogenes serotype 4b (strain CLIP80459)</name>
    <dbReference type="NCBI Taxonomy" id="568819"/>
    <lineage>
        <taxon>Bacteria</taxon>
        <taxon>Bacillati</taxon>
        <taxon>Bacillota</taxon>
        <taxon>Bacilli</taxon>
        <taxon>Bacillales</taxon>
        <taxon>Listeriaceae</taxon>
        <taxon>Listeria</taxon>
    </lineage>
</organism>
<protein>
    <recommendedName>
        <fullName evidence="1">HTH-type transcriptional regulator MntR</fullName>
    </recommendedName>
    <alternativeName>
        <fullName evidence="1">Manganese transport regulator</fullName>
    </alternativeName>
</protein>
<proteinExistence type="inferred from homology"/>
<feature type="chain" id="PRO_1000212737" description="HTH-type transcriptional regulator MntR">
    <location>
        <begin position="1"/>
        <end position="142"/>
    </location>
</feature>
<feature type="domain" description="HTH dtxR-type" evidence="1">
    <location>
        <begin position="1"/>
        <end position="63"/>
    </location>
</feature>
<feature type="binding site" evidence="1">
    <location>
        <position position="8"/>
    </location>
    <ligand>
        <name>Mn(2+)</name>
        <dbReference type="ChEBI" id="CHEBI:29035"/>
        <label>1</label>
    </ligand>
</feature>
<feature type="binding site" evidence="1">
    <location>
        <position position="11"/>
    </location>
    <ligand>
        <name>Mn(2+)</name>
        <dbReference type="ChEBI" id="CHEBI:29035"/>
        <label>2</label>
    </ligand>
</feature>
<feature type="binding site" evidence="1">
    <location>
        <position position="77"/>
    </location>
    <ligand>
        <name>Mn(2+)</name>
        <dbReference type="ChEBI" id="CHEBI:29035"/>
        <label>2</label>
    </ligand>
</feature>
<feature type="binding site" evidence="1">
    <location>
        <position position="99"/>
    </location>
    <ligand>
        <name>Mn(2+)</name>
        <dbReference type="ChEBI" id="CHEBI:29035"/>
        <label>1</label>
    </ligand>
</feature>
<feature type="binding site" evidence="1">
    <location>
        <position position="99"/>
    </location>
    <ligand>
        <name>Mn(2+)</name>
        <dbReference type="ChEBI" id="CHEBI:29035"/>
        <label>2</label>
    </ligand>
</feature>
<feature type="binding site" evidence="1">
    <location>
        <position position="102"/>
    </location>
    <ligand>
        <name>Mn(2+)</name>
        <dbReference type="ChEBI" id="CHEBI:29035"/>
        <label>1</label>
    </ligand>
</feature>
<feature type="binding site" evidence="1">
    <location>
        <position position="102"/>
    </location>
    <ligand>
        <name>Mn(2+)</name>
        <dbReference type="ChEBI" id="CHEBI:29035"/>
        <label>2</label>
    </ligand>
</feature>
<feature type="binding site" evidence="1">
    <location>
        <position position="103"/>
    </location>
    <ligand>
        <name>Mn(2+)</name>
        <dbReference type="ChEBI" id="CHEBI:29035"/>
        <label>1</label>
    </ligand>
</feature>
<dbReference type="EMBL" id="FM242711">
    <property type="protein sequence ID" value="CAS05652.1"/>
    <property type="molecule type" value="Genomic_DNA"/>
</dbReference>
<dbReference type="RefSeq" id="WP_012681359.1">
    <property type="nucleotide sequence ID" value="NC_012488.1"/>
</dbReference>
<dbReference type="SMR" id="C1KWH7"/>
<dbReference type="KEGG" id="lmc:Lm4b_01894"/>
<dbReference type="HOGENOM" id="CLU_069532_3_0_9"/>
<dbReference type="GO" id="GO:0005737">
    <property type="term" value="C:cytoplasm"/>
    <property type="evidence" value="ECO:0007669"/>
    <property type="project" value="UniProtKB-SubCell"/>
</dbReference>
<dbReference type="GO" id="GO:0003677">
    <property type="term" value="F:DNA binding"/>
    <property type="evidence" value="ECO:0007669"/>
    <property type="project" value="UniProtKB-KW"/>
</dbReference>
<dbReference type="GO" id="GO:0003700">
    <property type="term" value="F:DNA-binding transcription factor activity"/>
    <property type="evidence" value="ECO:0007669"/>
    <property type="project" value="UniProtKB-UniRule"/>
</dbReference>
<dbReference type="GO" id="GO:0030145">
    <property type="term" value="F:manganese ion binding"/>
    <property type="evidence" value="ECO:0007669"/>
    <property type="project" value="UniProtKB-UniRule"/>
</dbReference>
<dbReference type="GO" id="GO:0046983">
    <property type="term" value="F:protein dimerization activity"/>
    <property type="evidence" value="ECO:0007669"/>
    <property type="project" value="InterPro"/>
</dbReference>
<dbReference type="GO" id="GO:0030026">
    <property type="term" value="P:intracellular manganese ion homeostasis"/>
    <property type="evidence" value="ECO:0007669"/>
    <property type="project" value="UniProtKB-UniRule"/>
</dbReference>
<dbReference type="FunFam" id="1.10.10.10:FF:000189">
    <property type="entry name" value="HTH-type transcriptional regulator MntR"/>
    <property type="match status" value="1"/>
</dbReference>
<dbReference type="Gene3D" id="1.10.60.10">
    <property type="entry name" value="Iron dependent repressor, metal binding and dimerisation domain"/>
    <property type="match status" value="1"/>
</dbReference>
<dbReference type="Gene3D" id="1.10.10.10">
    <property type="entry name" value="Winged helix-like DNA-binding domain superfamily/Winged helix DNA-binding domain"/>
    <property type="match status" value="1"/>
</dbReference>
<dbReference type="HAMAP" id="MF_00732">
    <property type="entry name" value="HTH_MntR"/>
    <property type="match status" value="1"/>
</dbReference>
<dbReference type="InterPro" id="IPR050536">
    <property type="entry name" value="DtxR_MntR_Metal-Reg"/>
</dbReference>
<dbReference type="InterPro" id="IPR001367">
    <property type="entry name" value="Fe_dep_repressor"/>
</dbReference>
<dbReference type="InterPro" id="IPR036421">
    <property type="entry name" value="Fe_dep_repressor_sf"/>
</dbReference>
<dbReference type="InterPro" id="IPR022687">
    <property type="entry name" value="HTH_DTXR"/>
</dbReference>
<dbReference type="InterPro" id="IPR022897">
    <property type="entry name" value="HTH_tscrpt_reg_MntR"/>
</dbReference>
<dbReference type="InterPro" id="IPR022689">
    <property type="entry name" value="Iron_dep_repressor"/>
</dbReference>
<dbReference type="InterPro" id="IPR036388">
    <property type="entry name" value="WH-like_DNA-bd_sf"/>
</dbReference>
<dbReference type="InterPro" id="IPR036390">
    <property type="entry name" value="WH_DNA-bd_sf"/>
</dbReference>
<dbReference type="NCBIfam" id="NF003025">
    <property type="entry name" value="PRK03902.1"/>
    <property type="match status" value="1"/>
</dbReference>
<dbReference type="PANTHER" id="PTHR33238">
    <property type="entry name" value="IRON (METAL) DEPENDENT REPRESSOR, DTXR FAMILY"/>
    <property type="match status" value="1"/>
</dbReference>
<dbReference type="PANTHER" id="PTHR33238:SF11">
    <property type="entry name" value="TRANSCRIPTIONAL REGULATOR MNTR"/>
    <property type="match status" value="1"/>
</dbReference>
<dbReference type="Pfam" id="PF02742">
    <property type="entry name" value="Fe_dep_repr_C"/>
    <property type="match status" value="1"/>
</dbReference>
<dbReference type="Pfam" id="PF01325">
    <property type="entry name" value="Fe_dep_repress"/>
    <property type="match status" value="1"/>
</dbReference>
<dbReference type="SMART" id="SM00529">
    <property type="entry name" value="HTH_DTXR"/>
    <property type="match status" value="1"/>
</dbReference>
<dbReference type="SUPFAM" id="SSF47979">
    <property type="entry name" value="Iron-dependent repressor protein, dimerization domain"/>
    <property type="match status" value="1"/>
</dbReference>
<dbReference type="SUPFAM" id="SSF46785">
    <property type="entry name" value="Winged helix' DNA-binding domain"/>
    <property type="match status" value="1"/>
</dbReference>
<dbReference type="PROSITE" id="PS50944">
    <property type="entry name" value="HTH_DTXR"/>
    <property type="match status" value="1"/>
</dbReference>
<gene>
    <name evidence="1" type="primary">mntR</name>
    <name type="ordered locus">Lm4b_01894</name>
</gene>
<keyword id="KW-0010">Activator</keyword>
<keyword id="KW-0963">Cytoplasm</keyword>
<keyword id="KW-0238">DNA-binding</keyword>
<keyword id="KW-0464">Manganese</keyword>
<keyword id="KW-0479">Metal-binding</keyword>
<keyword id="KW-0678">Repressor</keyword>
<keyword id="KW-0804">Transcription</keyword>
<keyword id="KW-0805">Transcription regulation</keyword>
<name>MNTR_LISMC</name>
<sequence>MPTPSMEDYIEKIYSLIETKGYARVSDIADELFVHPSSVTKMVQKLDKDEYLIYEKYRGLILTPKGTQMGKRLLERHALLESFLSIIGVDPSHIYHDVEGIEHHLSWNSIDRIGDVVQFFENHPDALKTLKAMETNKPETKE</sequence>
<evidence type="ECO:0000255" key="1">
    <source>
        <dbReference type="HAMAP-Rule" id="MF_00732"/>
    </source>
</evidence>
<accession>C1KWH7</accession>
<reference key="1">
    <citation type="journal article" date="2012" name="BMC Genomics">
        <title>Comparative genomics and transcriptomics of lineages I, II, and III strains of Listeria monocytogenes.</title>
        <authorList>
            <person name="Hain T."/>
            <person name="Ghai R."/>
            <person name="Billion A."/>
            <person name="Kuenne C.T."/>
            <person name="Steinweg C."/>
            <person name="Izar B."/>
            <person name="Mohamed W."/>
            <person name="Mraheil M."/>
            <person name="Domann E."/>
            <person name="Schaffrath S."/>
            <person name="Karst U."/>
            <person name="Goesmann A."/>
            <person name="Oehm S."/>
            <person name="Puhler A."/>
            <person name="Merkl R."/>
            <person name="Vorwerk S."/>
            <person name="Glaser P."/>
            <person name="Garrido P."/>
            <person name="Rusniok C."/>
            <person name="Buchrieser C."/>
            <person name="Goebel W."/>
            <person name="Chakraborty T."/>
        </authorList>
    </citation>
    <scope>NUCLEOTIDE SEQUENCE [LARGE SCALE GENOMIC DNA]</scope>
    <source>
        <strain>CLIP80459</strain>
    </source>
</reference>
<comment type="function">
    <text evidence="1">Central regulator of manganese homeostasis.</text>
</comment>
<comment type="activity regulation">
    <text evidence="1">DNA binding is strongly activated by Mn(2+).</text>
</comment>
<comment type="subunit">
    <text evidence="1">Homodimer.</text>
</comment>
<comment type="subcellular location">
    <subcellularLocation>
        <location evidence="1">Cytoplasm</location>
    </subcellularLocation>
</comment>
<comment type="similarity">
    <text evidence="1">Belongs to the DtxR/MntR family.</text>
</comment>